<comment type="function">
    <text evidence="1">One of the primary rRNA binding proteins, this protein initially binds near the 5'-end of the 23S rRNA. It is important during the early stages of 50S assembly. It makes multiple contacts with different domains of the 23S rRNA in the assembled 50S subunit and ribosome.</text>
</comment>
<comment type="function">
    <text evidence="1">Forms part of the polypeptide exit tunnel.</text>
</comment>
<comment type="subunit">
    <text evidence="1">Part of the 50S ribosomal subunit.</text>
</comment>
<comment type="similarity">
    <text evidence="1">Belongs to the universal ribosomal protein uL4 family.</text>
</comment>
<evidence type="ECO:0000255" key="1">
    <source>
        <dbReference type="HAMAP-Rule" id="MF_01328"/>
    </source>
</evidence>
<evidence type="ECO:0000256" key="2">
    <source>
        <dbReference type="SAM" id="MobiDB-lite"/>
    </source>
</evidence>
<evidence type="ECO:0000305" key="3"/>
<feature type="chain" id="PRO_1000067592" description="Large ribosomal subunit protein uL4">
    <location>
        <begin position="1"/>
        <end position="201"/>
    </location>
</feature>
<feature type="region of interest" description="Disordered" evidence="2">
    <location>
        <begin position="44"/>
        <end position="71"/>
    </location>
</feature>
<name>RL4_ECO24</name>
<accession>A7ZSK8</accession>
<keyword id="KW-1185">Reference proteome</keyword>
<keyword id="KW-0687">Ribonucleoprotein</keyword>
<keyword id="KW-0689">Ribosomal protein</keyword>
<keyword id="KW-0694">RNA-binding</keyword>
<keyword id="KW-0699">rRNA-binding</keyword>
<dbReference type="EMBL" id="CP000800">
    <property type="protein sequence ID" value="ABV17827.1"/>
    <property type="molecule type" value="Genomic_DNA"/>
</dbReference>
<dbReference type="RefSeq" id="WP_000424395.1">
    <property type="nucleotide sequence ID" value="NC_009801.1"/>
</dbReference>
<dbReference type="SMR" id="A7ZSK8"/>
<dbReference type="GeneID" id="97442859"/>
<dbReference type="KEGG" id="ecw:EcE24377A_3802"/>
<dbReference type="HOGENOM" id="CLU_041575_5_2_6"/>
<dbReference type="Proteomes" id="UP000001122">
    <property type="component" value="Chromosome"/>
</dbReference>
<dbReference type="GO" id="GO:1990904">
    <property type="term" value="C:ribonucleoprotein complex"/>
    <property type="evidence" value="ECO:0007669"/>
    <property type="project" value="UniProtKB-KW"/>
</dbReference>
<dbReference type="GO" id="GO:0005840">
    <property type="term" value="C:ribosome"/>
    <property type="evidence" value="ECO:0007669"/>
    <property type="project" value="UniProtKB-KW"/>
</dbReference>
<dbReference type="GO" id="GO:0019843">
    <property type="term" value="F:rRNA binding"/>
    <property type="evidence" value="ECO:0007669"/>
    <property type="project" value="UniProtKB-UniRule"/>
</dbReference>
<dbReference type="GO" id="GO:0003735">
    <property type="term" value="F:structural constituent of ribosome"/>
    <property type="evidence" value="ECO:0007669"/>
    <property type="project" value="InterPro"/>
</dbReference>
<dbReference type="GO" id="GO:0006412">
    <property type="term" value="P:translation"/>
    <property type="evidence" value="ECO:0007669"/>
    <property type="project" value="UniProtKB-UniRule"/>
</dbReference>
<dbReference type="FunFam" id="3.40.1370.10:FF:000001">
    <property type="entry name" value="50S ribosomal protein L4"/>
    <property type="match status" value="1"/>
</dbReference>
<dbReference type="Gene3D" id="3.40.1370.10">
    <property type="match status" value="1"/>
</dbReference>
<dbReference type="HAMAP" id="MF_01328_B">
    <property type="entry name" value="Ribosomal_uL4_B"/>
    <property type="match status" value="1"/>
</dbReference>
<dbReference type="InterPro" id="IPR002136">
    <property type="entry name" value="Ribosomal_uL4"/>
</dbReference>
<dbReference type="InterPro" id="IPR013005">
    <property type="entry name" value="Ribosomal_uL4-like"/>
</dbReference>
<dbReference type="InterPro" id="IPR023574">
    <property type="entry name" value="Ribosomal_uL4_dom_sf"/>
</dbReference>
<dbReference type="NCBIfam" id="TIGR03953">
    <property type="entry name" value="rplD_bact"/>
    <property type="match status" value="1"/>
</dbReference>
<dbReference type="PANTHER" id="PTHR10746">
    <property type="entry name" value="50S RIBOSOMAL PROTEIN L4"/>
    <property type="match status" value="1"/>
</dbReference>
<dbReference type="PANTHER" id="PTHR10746:SF6">
    <property type="entry name" value="LARGE RIBOSOMAL SUBUNIT PROTEIN UL4M"/>
    <property type="match status" value="1"/>
</dbReference>
<dbReference type="Pfam" id="PF00573">
    <property type="entry name" value="Ribosomal_L4"/>
    <property type="match status" value="1"/>
</dbReference>
<dbReference type="SUPFAM" id="SSF52166">
    <property type="entry name" value="Ribosomal protein L4"/>
    <property type="match status" value="1"/>
</dbReference>
<gene>
    <name evidence="1" type="primary">rplD</name>
    <name type="ordered locus">EcE24377A_3802</name>
</gene>
<protein>
    <recommendedName>
        <fullName evidence="1">Large ribosomal subunit protein uL4</fullName>
    </recommendedName>
    <alternativeName>
        <fullName evidence="3">50S ribosomal protein L4</fullName>
    </alternativeName>
</protein>
<organism>
    <name type="scientific">Escherichia coli O139:H28 (strain E24377A / ETEC)</name>
    <dbReference type="NCBI Taxonomy" id="331111"/>
    <lineage>
        <taxon>Bacteria</taxon>
        <taxon>Pseudomonadati</taxon>
        <taxon>Pseudomonadota</taxon>
        <taxon>Gammaproteobacteria</taxon>
        <taxon>Enterobacterales</taxon>
        <taxon>Enterobacteriaceae</taxon>
        <taxon>Escherichia</taxon>
    </lineage>
</organism>
<proteinExistence type="inferred from homology"/>
<sequence length="201" mass="22087">MELVLKDAQSALTVSETTFGRDFNEALVHQVVVAYAAGARQGTRAQKTRAEVTGSGKKPWRQKGTGRARSGSIKSPIWRSGGVTFAARPQDHSQKVNKKMYRGALKSILSELVRQDRLIVVEKFSVEAPKTKLLAQKLKDMALEDVLIITGELDENLFLAARNLHKVDVRDATGIDPVSLIAFDKVVMTADAVKQVEEMLA</sequence>
<reference key="1">
    <citation type="journal article" date="2008" name="J. Bacteriol.">
        <title>The pangenome structure of Escherichia coli: comparative genomic analysis of E. coli commensal and pathogenic isolates.</title>
        <authorList>
            <person name="Rasko D.A."/>
            <person name="Rosovitz M.J."/>
            <person name="Myers G.S.A."/>
            <person name="Mongodin E.F."/>
            <person name="Fricke W.F."/>
            <person name="Gajer P."/>
            <person name="Crabtree J."/>
            <person name="Sebaihia M."/>
            <person name="Thomson N.R."/>
            <person name="Chaudhuri R."/>
            <person name="Henderson I.R."/>
            <person name="Sperandio V."/>
            <person name="Ravel J."/>
        </authorList>
    </citation>
    <scope>NUCLEOTIDE SEQUENCE [LARGE SCALE GENOMIC DNA]</scope>
    <source>
        <strain>E24377A / ETEC</strain>
    </source>
</reference>